<accession>Q5HL70</accession>
<feature type="chain" id="PRO_0000213186" description="Holin-like protein CidA">
    <location>
        <begin position="1"/>
        <end position="130"/>
    </location>
</feature>
<feature type="transmembrane region" description="Helical" evidence="1">
    <location>
        <begin position="6"/>
        <end position="26"/>
    </location>
</feature>
<feature type="transmembrane region" description="Helical" evidence="1">
    <location>
        <begin position="31"/>
        <end position="51"/>
    </location>
</feature>
<feature type="transmembrane region" description="Helical" evidence="1">
    <location>
        <begin position="65"/>
        <end position="85"/>
    </location>
</feature>
<feature type="transmembrane region" description="Helical" evidence="1">
    <location>
        <begin position="93"/>
        <end position="113"/>
    </location>
</feature>
<comment type="function">
    <text evidence="1">Increases the activity of extracellular murein hydrolases possibly by mediating their export via hole formation. Inhibited by the antiholin-like proteins LrgAB. In an unstressed cell, the LrgAB products probably inhibit the function of the CidAB proteins. When a cell is stressed by the addition of antibiotics or by other factors in the environment, the CidAB proteins possibly oligomerize within the bacterial cell membrane, creating lesions that disrupt the proton motive force, which in turn results in loss of cell viability. These lesions are also hypothesized to regulate the subsequent cell lysis by either allowing the murein hydrolases access to the cell wall substrate and/or regulating their activity by a possible change in the cell wall pH that results from loss of membrane potential.</text>
</comment>
<comment type="subcellular location">
    <subcellularLocation>
        <location evidence="1">Cell membrane</location>
        <topology evidence="1">Multi-pass membrane protein</topology>
    </subcellularLocation>
</comment>
<comment type="similarity">
    <text evidence="1">Belongs to the CidA/LrgA family. CidA subfamily.</text>
</comment>
<proteinExistence type="inferred from homology"/>
<organism>
    <name type="scientific">Staphylococcus epidermidis (strain ATCC 35984 / DSM 28319 / BCRC 17069 / CCUG 31568 / BM 3577 / RP62A)</name>
    <dbReference type="NCBI Taxonomy" id="176279"/>
    <lineage>
        <taxon>Bacteria</taxon>
        <taxon>Bacillati</taxon>
        <taxon>Bacillota</taxon>
        <taxon>Bacilli</taxon>
        <taxon>Bacillales</taxon>
        <taxon>Staphylococcaceae</taxon>
        <taxon>Staphylococcus</taxon>
    </lineage>
</organism>
<evidence type="ECO:0000255" key="1">
    <source>
        <dbReference type="HAMAP-Rule" id="MF_01143"/>
    </source>
</evidence>
<dbReference type="EMBL" id="CP000029">
    <property type="protein sequence ID" value="AAW52994.1"/>
    <property type="molecule type" value="Genomic_DNA"/>
</dbReference>
<dbReference type="RefSeq" id="WP_001832353.1">
    <property type="nucleotide sequence ID" value="NC_002976.3"/>
</dbReference>
<dbReference type="SMR" id="Q5HL70"/>
<dbReference type="STRING" id="176279.SERP2117"/>
<dbReference type="KEGG" id="ser:SERP2117"/>
<dbReference type="eggNOG" id="COG1380">
    <property type="taxonomic scope" value="Bacteria"/>
</dbReference>
<dbReference type="HOGENOM" id="CLU_113736_2_1_9"/>
<dbReference type="Proteomes" id="UP000000531">
    <property type="component" value="Chromosome"/>
</dbReference>
<dbReference type="GO" id="GO:0005886">
    <property type="term" value="C:plasma membrane"/>
    <property type="evidence" value="ECO:0007669"/>
    <property type="project" value="UniProtKB-SubCell"/>
</dbReference>
<dbReference type="GO" id="GO:0019835">
    <property type="term" value="P:cytolysis"/>
    <property type="evidence" value="ECO:0007669"/>
    <property type="project" value="UniProtKB-UniRule"/>
</dbReference>
<dbReference type="GO" id="GO:0031640">
    <property type="term" value="P:killing of cells of another organism"/>
    <property type="evidence" value="ECO:0007669"/>
    <property type="project" value="UniProtKB-KW"/>
</dbReference>
<dbReference type="GO" id="GO:0012501">
    <property type="term" value="P:programmed cell death"/>
    <property type="evidence" value="ECO:0007669"/>
    <property type="project" value="UniProtKB-UniRule"/>
</dbReference>
<dbReference type="HAMAP" id="MF_01143">
    <property type="entry name" value="CidA"/>
    <property type="match status" value="1"/>
</dbReference>
<dbReference type="InterPro" id="IPR023760">
    <property type="entry name" value="Holin-like_CidA"/>
</dbReference>
<dbReference type="InterPro" id="IPR005538">
    <property type="entry name" value="LrgA/CidA"/>
</dbReference>
<dbReference type="PANTHER" id="PTHR33931:SF2">
    <property type="entry name" value="HOLIN-LIKE PROTEIN CIDA"/>
    <property type="match status" value="1"/>
</dbReference>
<dbReference type="PANTHER" id="PTHR33931">
    <property type="entry name" value="HOLIN-LIKE PROTEIN CIDA-RELATED"/>
    <property type="match status" value="1"/>
</dbReference>
<dbReference type="Pfam" id="PF03788">
    <property type="entry name" value="LrgA"/>
    <property type="match status" value="1"/>
</dbReference>
<keyword id="KW-1003">Cell membrane</keyword>
<keyword id="KW-0204">Cytolysis</keyword>
<keyword id="KW-0472">Membrane</keyword>
<keyword id="KW-1185">Reference proteome</keyword>
<keyword id="KW-0812">Transmembrane</keyword>
<keyword id="KW-1133">Transmembrane helix</keyword>
<protein>
    <recommendedName>
        <fullName evidence="1">Holin-like protein CidA</fullName>
    </recommendedName>
</protein>
<reference key="1">
    <citation type="journal article" date="2005" name="J. Bacteriol.">
        <title>Insights on evolution of virulence and resistance from the complete genome analysis of an early methicillin-resistant Staphylococcus aureus strain and a biofilm-producing methicillin-resistant Staphylococcus epidermidis strain.</title>
        <authorList>
            <person name="Gill S.R."/>
            <person name="Fouts D.E."/>
            <person name="Archer G.L."/>
            <person name="Mongodin E.F."/>
            <person name="DeBoy R.T."/>
            <person name="Ravel J."/>
            <person name="Paulsen I.T."/>
            <person name="Kolonay J.F."/>
            <person name="Brinkac L.M."/>
            <person name="Beanan M.J."/>
            <person name="Dodson R.J."/>
            <person name="Daugherty S.C."/>
            <person name="Madupu R."/>
            <person name="Angiuoli S.V."/>
            <person name="Durkin A.S."/>
            <person name="Haft D.H."/>
            <person name="Vamathevan J.J."/>
            <person name="Khouri H."/>
            <person name="Utterback T.R."/>
            <person name="Lee C."/>
            <person name="Dimitrov G."/>
            <person name="Jiang L."/>
            <person name="Qin H."/>
            <person name="Weidman J."/>
            <person name="Tran K."/>
            <person name="Kang K.H."/>
            <person name="Hance I.R."/>
            <person name="Nelson K.E."/>
            <person name="Fraser C.M."/>
        </authorList>
    </citation>
    <scope>NUCLEOTIDE SEQUENCE [LARGE SCALE GENOMIC DNA]</scope>
    <source>
        <strain>ATCC 35984 / DSM 28319 / BCRC 17069 / CCUG 31568 / BM 3577 / RP62A</strain>
    </source>
</reference>
<gene>
    <name evidence="1" type="primary">cidA</name>
    <name type="ordered locus">SERP2117</name>
</gene>
<name>CIDA_STAEQ</name>
<sequence>MEKAKFVIKLILQLALIMLITFIGTEVQKLLHIPLAGSIVGLMLFFLLLQFKIVPESWINVGADFLLKTMVFFFIPSVVGIMDVASNITMNYILFFIVIIIGTCLVALSSGYIAEKMLEKSNTRKGTDHS</sequence>